<protein>
    <recommendedName>
        <fullName>Phycocyanobilin lyase subunit alpha</fullName>
        <ecNumber>4.-.-.-</ecNumber>
    </recommendedName>
    <alternativeName>
        <fullName>Phycocyanin operon protein CpcE</fullName>
    </alternativeName>
</protein>
<dbReference type="EC" id="4.-.-.-"/>
<dbReference type="EMBL" id="X06084">
    <property type="protein sequence ID" value="CAA29466.1"/>
    <property type="molecule type" value="Genomic_DNA"/>
</dbReference>
<dbReference type="EMBL" id="X07013">
    <property type="protein sequence ID" value="CAA30066.1"/>
    <property type="status" value="ALT_INIT"/>
    <property type="molecule type" value="Genomic_DNA"/>
</dbReference>
<dbReference type="PIR" id="S00715">
    <property type="entry name" value="S00715"/>
</dbReference>
<dbReference type="SMR" id="P07126"/>
<dbReference type="GO" id="GO:0030089">
    <property type="term" value="C:phycobilisome"/>
    <property type="evidence" value="ECO:0007669"/>
    <property type="project" value="UniProtKB-KW"/>
</dbReference>
<dbReference type="GO" id="GO:0016829">
    <property type="term" value="F:lyase activity"/>
    <property type="evidence" value="ECO:0007669"/>
    <property type="project" value="UniProtKB-KW"/>
</dbReference>
<dbReference type="GO" id="GO:0016491">
    <property type="term" value="F:oxidoreductase activity"/>
    <property type="evidence" value="ECO:0007669"/>
    <property type="project" value="TreeGrafter"/>
</dbReference>
<dbReference type="Gene3D" id="1.25.10.10">
    <property type="entry name" value="Leucine-rich Repeat Variant"/>
    <property type="match status" value="2"/>
</dbReference>
<dbReference type="InterPro" id="IPR011989">
    <property type="entry name" value="ARM-like"/>
</dbReference>
<dbReference type="InterPro" id="IPR016024">
    <property type="entry name" value="ARM-type_fold"/>
</dbReference>
<dbReference type="InterPro" id="IPR004155">
    <property type="entry name" value="PBS_lyase_HEAT"/>
</dbReference>
<dbReference type="PANTHER" id="PTHR12697:SF5">
    <property type="entry name" value="DEOXYHYPUSINE HYDROXYLASE"/>
    <property type="match status" value="1"/>
</dbReference>
<dbReference type="PANTHER" id="PTHR12697">
    <property type="entry name" value="PBS LYASE HEAT-LIKE PROTEIN"/>
    <property type="match status" value="1"/>
</dbReference>
<dbReference type="Pfam" id="PF13646">
    <property type="entry name" value="HEAT_2"/>
    <property type="match status" value="2"/>
</dbReference>
<dbReference type="Pfam" id="PF03130">
    <property type="entry name" value="HEAT_PBS"/>
    <property type="match status" value="1"/>
</dbReference>
<dbReference type="SMART" id="SM00567">
    <property type="entry name" value="EZ_HEAT"/>
    <property type="match status" value="6"/>
</dbReference>
<dbReference type="SUPFAM" id="SSF48371">
    <property type="entry name" value="ARM repeat"/>
    <property type="match status" value="1"/>
</dbReference>
<reference key="1">
    <citation type="journal article" date="1988" name="Mol. Gen. Genet.">
        <title>A multigene family in Calothrix sp. PCC 7601 encodes phycocyanin, the major component of the cyanobacterial light harvesting antenna.</title>
        <authorList>
            <person name="Mazel D."/>
            <person name="Houmard J."/>
            <person name="Tandeau de Marsac N."/>
        </authorList>
    </citation>
    <scope>NUCLEOTIDE SEQUENCE [GENOMIC DNA]</scope>
</reference>
<reference key="2">
    <citation type="journal article" date="1988" name="J. Mol. Biol.">
        <title>Molecular characterization and evolution of sequences encoding light-harvesting components in the chromatically adapting cyanobacterium Fremyella diplosiphon.</title>
        <authorList>
            <person name="Conley P.B."/>
            <person name="Lemaux P.G."/>
            <person name="Grossman A."/>
        </authorList>
    </citation>
    <scope>NUCLEOTIDE SEQUENCE [GENOMIC DNA]</scope>
</reference>
<feature type="chain" id="PRO_0000199267" description="Phycocyanobilin lyase subunit alpha">
    <location>
        <begin position="1"/>
        <end position="294"/>
    </location>
</feature>
<feature type="sequence conflict" description="In Ref. 2; CAA30066." evidence="2" ref="2">
    <original>IDV</original>
    <variation>NDL</variation>
    <location>
        <begin position="66"/>
        <end position="68"/>
    </location>
</feature>
<feature type="sequence conflict" description="In Ref. 2; CAA30066." evidence="2" ref="2">
    <original>N</original>
    <variation>I</variation>
    <location>
        <position position="81"/>
    </location>
</feature>
<feature type="sequence conflict" description="In Ref. 2." evidence="2" ref="2">
    <original>SESTAGYNQYGDR</original>
    <variation>QNHCRLQSVWRS</variation>
    <location>
        <begin position="205"/>
        <end position="217"/>
    </location>
</feature>
<comment type="function">
    <text evidence="1">Required for the chromophorylation of the CpcA gene product.</text>
</comment>
<comment type="subunit">
    <text evidence="1">CpcE and CpcF associate to form a lyase.</text>
</comment>
<comment type="similarity">
    <text evidence="2">Belongs to the CpcE/RpcE/PecE family.</text>
</comment>
<comment type="sequence caution" evidence="2">
    <conflict type="erroneous initiation">
        <sequence resource="EMBL-CDS" id="CAA30066"/>
    </conflict>
</comment>
<evidence type="ECO:0000250" key="1"/>
<evidence type="ECO:0000305" key="2"/>
<proteinExistence type="inferred from homology"/>
<keyword id="KW-0042">Antenna complex</keyword>
<keyword id="KW-0456">Lyase</keyword>
<keyword id="KW-0605">Phycobilisome</keyword>
<organism>
    <name type="scientific">Microchaete diplosiphon</name>
    <name type="common">Fremyella diplosiphon</name>
    <dbReference type="NCBI Taxonomy" id="1197"/>
    <lineage>
        <taxon>Bacteria</taxon>
        <taxon>Bacillati</taxon>
        <taxon>Cyanobacteriota</taxon>
        <taxon>Cyanophyceae</taxon>
        <taxon>Nostocales</taxon>
        <taxon>Rivulariaceae</taxon>
        <taxon>Microchaete</taxon>
    </lineage>
</organism>
<name>CPCE_MICDP</name>
<sequence length="294" mass="32269">MYRHLSEGIEDHREQEQKVENAANIQDDNQLTVEQAIANLQGEDLGLRVYAAWWLGRFRVDAPEAIDVLIQALEDEDDRTNVGGYPLRRNAARALGKLGEKRAVPALIKALECSDFYVREAAAQSLEMLGDSSSIPRLIELLNDQVPGTLPAPEPPQLTQPFDAIIEALGTLGASDAIPIIQEFLEHTVPRIQYAAARAMYQLTSESTAGYNQYGDRLVQALAQDDLQLRRAVLSDLGAIGYLPAAEAIADTLAENSLKLISLKGLLEKQFQPTKPEDLSPGAIKVMQLMDALL</sequence>
<gene>
    <name type="primary">cpcE</name>
</gene>
<accession>P07126</accession>
<accession>P05520</accession>